<sequence length="373" mass="41517">MSDNSQKKVIVGMSGGVDSSVSAYLLQQQGYQVAGLFMKNWEEDDGEEYCSAATDLADAQAVCDKLGMELHTVNFAAEYWDNVFELFLEEYKAGRTPNPDILCNKEIKFKAFLEFAAEDLGADYIATGHYVRRQDVNGKSRLLRGLDGNKDQSYFLYTLSHEQLAQSLFPVGELEKPEVRRIAEQLELVTAKKKDSTGICFIGERKFRDFLGRYLPAQPGPIMTVDGQHVGEHQGLMYHTLGQRKGLGIGGTKEGGDDPWYVVDKDVANNILLVAQGHEHPRLMSVGLIAQQLHWVDREPVTAAFRCVVKTRYRQQDIPCTVTPLDDERVEVRFDDPVAAVTPGQSAVFYQGEVCLGGGIIEERYPLPGSVAN</sequence>
<gene>
    <name evidence="1" type="primary">mnmA</name>
    <name type="ordered locus">YE1722</name>
</gene>
<organism>
    <name type="scientific">Yersinia enterocolitica serotype O:8 / biotype 1B (strain NCTC 13174 / 8081)</name>
    <dbReference type="NCBI Taxonomy" id="393305"/>
    <lineage>
        <taxon>Bacteria</taxon>
        <taxon>Pseudomonadati</taxon>
        <taxon>Pseudomonadota</taxon>
        <taxon>Gammaproteobacteria</taxon>
        <taxon>Enterobacterales</taxon>
        <taxon>Yersiniaceae</taxon>
        <taxon>Yersinia</taxon>
    </lineage>
</organism>
<reference key="1">
    <citation type="journal article" date="2006" name="PLoS Genet.">
        <title>The complete genome sequence and comparative genome analysis of the high pathogenicity Yersinia enterocolitica strain 8081.</title>
        <authorList>
            <person name="Thomson N.R."/>
            <person name="Howard S."/>
            <person name="Wren B.W."/>
            <person name="Holden M.T.G."/>
            <person name="Crossman L."/>
            <person name="Challis G.L."/>
            <person name="Churcher C."/>
            <person name="Mungall K."/>
            <person name="Brooks K."/>
            <person name="Chillingworth T."/>
            <person name="Feltwell T."/>
            <person name="Abdellah Z."/>
            <person name="Hauser H."/>
            <person name="Jagels K."/>
            <person name="Maddison M."/>
            <person name="Moule S."/>
            <person name="Sanders M."/>
            <person name="Whitehead S."/>
            <person name="Quail M.A."/>
            <person name="Dougan G."/>
            <person name="Parkhill J."/>
            <person name="Prentice M.B."/>
        </authorList>
    </citation>
    <scope>NUCLEOTIDE SEQUENCE [LARGE SCALE GENOMIC DNA]</scope>
    <source>
        <strain>NCTC 13174 / 8081</strain>
    </source>
</reference>
<protein>
    <recommendedName>
        <fullName evidence="1">tRNA-specific 2-thiouridylase MnmA</fullName>
        <ecNumber evidence="1">2.8.1.13</ecNumber>
    </recommendedName>
</protein>
<evidence type="ECO:0000255" key="1">
    <source>
        <dbReference type="HAMAP-Rule" id="MF_00144"/>
    </source>
</evidence>
<dbReference type="EC" id="2.8.1.13" evidence="1"/>
<dbReference type="EMBL" id="AM286415">
    <property type="protein sequence ID" value="CAL11797.1"/>
    <property type="molecule type" value="Genomic_DNA"/>
</dbReference>
<dbReference type="RefSeq" id="WP_005170633.1">
    <property type="nucleotide sequence ID" value="NC_008800.1"/>
</dbReference>
<dbReference type="RefSeq" id="YP_001006008.1">
    <property type="nucleotide sequence ID" value="NC_008800.1"/>
</dbReference>
<dbReference type="SMR" id="A1JLK6"/>
<dbReference type="KEGG" id="yen:YE1722"/>
<dbReference type="PATRIC" id="fig|393305.7.peg.1868"/>
<dbReference type="eggNOG" id="COG0482">
    <property type="taxonomic scope" value="Bacteria"/>
</dbReference>
<dbReference type="HOGENOM" id="CLU_035188_1_0_6"/>
<dbReference type="OrthoDB" id="9800696at2"/>
<dbReference type="Proteomes" id="UP000000642">
    <property type="component" value="Chromosome"/>
</dbReference>
<dbReference type="GO" id="GO:0005737">
    <property type="term" value="C:cytoplasm"/>
    <property type="evidence" value="ECO:0007669"/>
    <property type="project" value="UniProtKB-SubCell"/>
</dbReference>
<dbReference type="GO" id="GO:0005524">
    <property type="term" value="F:ATP binding"/>
    <property type="evidence" value="ECO:0007669"/>
    <property type="project" value="UniProtKB-KW"/>
</dbReference>
<dbReference type="GO" id="GO:0000049">
    <property type="term" value="F:tRNA binding"/>
    <property type="evidence" value="ECO:0007669"/>
    <property type="project" value="UniProtKB-KW"/>
</dbReference>
<dbReference type="GO" id="GO:0103016">
    <property type="term" value="F:tRNA-uridine 2-sulfurtransferase activity"/>
    <property type="evidence" value="ECO:0007669"/>
    <property type="project" value="UniProtKB-EC"/>
</dbReference>
<dbReference type="GO" id="GO:0002143">
    <property type="term" value="P:tRNA wobble position uridine thiolation"/>
    <property type="evidence" value="ECO:0007669"/>
    <property type="project" value="TreeGrafter"/>
</dbReference>
<dbReference type="CDD" id="cd01998">
    <property type="entry name" value="MnmA_TRMU-like"/>
    <property type="match status" value="1"/>
</dbReference>
<dbReference type="FunFam" id="2.30.30.280:FF:000001">
    <property type="entry name" value="tRNA-specific 2-thiouridylase MnmA"/>
    <property type="match status" value="1"/>
</dbReference>
<dbReference type="FunFam" id="2.40.30.10:FF:000023">
    <property type="entry name" value="tRNA-specific 2-thiouridylase MnmA"/>
    <property type="match status" value="1"/>
</dbReference>
<dbReference type="FunFam" id="3.40.50.620:FF:000004">
    <property type="entry name" value="tRNA-specific 2-thiouridylase MnmA"/>
    <property type="match status" value="1"/>
</dbReference>
<dbReference type="Gene3D" id="2.30.30.280">
    <property type="entry name" value="Adenine nucleotide alpha hydrolases-like domains"/>
    <property type="match status" value="1"/>
</dbReference>
<dbReference type="Gene3D" id="3.40.50.620">
    <property type="entry name" value="HUPs"/>
    <property type="match status" value="1"/>
</dbReference>
<dbReference type="Gene3D" id="2.40.30.10">
    <property type="entry name" value="Translation factors"/>
    <property type="match status" value="1"/>
</dbReference>
<dbReference type="HAMAP" id="MF_00144">
    <property type="entry name" value="tRNA_thiouridyl_MnmA"/>
    <property type="match status" value="1"/>
</dbReference>
<dbReference type="InterPro" id="IPR004506">
    <property type="entry name" value="MnmA-like"/>
</dbReference>
<dbReference type="InterPro" id="IPR046885">
    <property type="entry name" value="MnmA-like_C"/>
</dbReference>
<dbReference type="InterPro" id="IPR046884">
    <property type="entry name" value="MnmA-like_central"/>
</dbReference>
<dbReference type="InterPro" id="IPR023382">
    <property type="entry name" value="MnmA-like_central_sf"/>
</dbReference>
<dbReference type="InterPro" id="IPR014729">
    <property type="entry name" value="Rossmann-like_a/b/a_fold"/>
</dbReference>
<dbReference type="NCBIfam" id="NF001138">
    <property type="entry name" value="PRK00143.1"/>
    <property type="match status" value="1"/>
</dbReference>
<dbReference type="NCBIfam" id="TIGR00420">
    <property type="entry name" value="trmU"/>
    <property type="match status" value="1"/>
</dbReference>
<dbReference type="PANTHER" id="PTHR11933:SF5">
    <property type="entry name" value="MITOCHONDRIAL TRNA-SPECIFIC 2-THIOURIDYLASE 1"/>
    <property type="match status" value="1"/>
</dbReference>
<dbReference type="PANTHER" id="PTHR11933">
    <property type="entry name" value="TRNA 5-METHYLAMINOMETHYL-2-THIOURIDYLATE -METHYLTRANSFERASE"/>
    <property type="match status" value="1"/>
</dbReference>
<dbReference type="Pfam" id="PF03054">
    <property type="entry name" value="tRNA_Me_trans"/>
    <property type="match status" value="1"/>
</dbReference>
<dbReference type="Pfam" id="PF20258">
    <property type="entry name" value="tRNA_Me_trans_C"/>
    <property type="match status" value="1"/>
</dbReference>
<dbReference type="Pfam" id="PF20259">
    <property type="entry name" value="tRNA_Me_trans_M"/>
    <property type="match status" value="1"/>
</dbReference>
<dbReference type="SUPFAM" id="SSF52402">
    <property type="entry name" value="Adenine nucleotide alpha hydrolases-like"/>
    <property type="match status" value="1"/>
</dbReference>
<accession>A1JLK6</accession>
<name>MNMA_YERE8</name>
<comment type="function">
    <text evidence="1">Catalyzes the 2-thiolation of uridine at the wobble position (U34) of tRNA(Lys), tRNA(Glu) and tRNA(Gln), leading to the formation of s(2)U34, the first step of tRNA-mnm(5)s(2)U34 synthesis. Sulfur is provided by IscS, via a sulfur-relay system. Binds ATP and its substrate tRNAs.</text>
</comment>
<comment type="catalytic activity">
    <reaction evidence="1">
        <text>S-sulfanyl-L-cysteinyl-[protein] + uridine(34) in tRNA + AH2 + ATP = 2-thiouridine(34) in tRNA + L-cysteinyl-[protein] + A + AMP + diphosphate + H(+)</text>
        <dbReference type="Rhea" id="RHEA:47032"/>
        <dbReference type="Rhea" id="RHEA-COMP:10131"/>
        <dbReference type="Rhea" id="RHEA-COMP:11726"/>
        <dbReference type="Rhea" id="RHEA-COMP:11727"/>
        <dbReference type="Rhea" id="RHEA-COMP:11728"/>
        <dbReference type="ChEBI" id="CHEBI:13193"/>
        <dbReference type="ChEBI" id="CHEBI:15378"/>
        <dbReference type="ChEBI" id="CHEBI:17499"/>
        <dbReference type="ChEBI" id="CHEBI:29950"/>
        <dbReference type="ChEBI" id="CHEBI:30616"/>
        <dbReference type="ChEBI" id="CHEBI:33019"/>
        <dbReference type="ChEBI" id="CHEBI:61963"/>
        <dbReference type="ChEBI" id="CHEBI:65315"/>
        <dbReference type="ChEBI" id="CHEBI:87170"/>
        <dbReference type="ChEBI" id="CHEBI:456215"/>
        <dbReference type="EC" id="2.8.1.13"/>
    </reaction>
</comment>
<comment type="subunit">
    <text evidence="1">Interacts with TusE.</text>
</comment>
<comment type="subcellular location">
    <subcellularLocation>
        <location evidence="1">Cytoplasm</location>
    </subcellularLocation>
</comment>
<comment type="similarity">
    <text evidence="1">Belongs to the MnmA/TRMU family.</text>
</comment>
<keyword id="KW-0067">ATP-binding</keyword>
<keyword id="KW-0963">Cytoplasm</keyword>
<keyword id="KW-1015">Disulfide bond</keyword>
<keyword id="KW-0547">Nucleotide-binding</keyword>
<keyword id="KW-0694">RNA-binding</keyword>
<keyword id="KW-0808">Transferase</keyword>
<keyword id="KW-0819">tRNA processing</keyword>
<keyword id="KW-0820">tRNA-binding</keyword>
<proteinExistence type="inferred from homology"/>
<feature type="chain" id="PRO_0000349862" description="tRNA-specific 2-thiouridylase MnmA">
    <location>
        <begin position="1"/>
        <end position="373"/>
    </location>
</feature>
<feature type="region of interest" description="Interaction with target base in tRNA" evidence="1">
    <location>
        <begin position="98"/>
        <end position="100"/>
    </location>
</feature>
<feature type="region of interest" description="Interaction with tRNA" evidence="1">
    <location>
        <begin position="150"/>
        <end position="152"/>
    </location>
</feature>
<feature type="region of interest" description="Interaction with tRNA" evidence="1">
    <location>
        <begin position="312"/>
        <end position="313"/>
    </location>
</feature>
<feature type="active site" description="Nucleophile" evidence="1">
    <location>
        <position position="103"/>
    </location>
</feature>
<feature type="active site" description="Cysteine persulfide intermediate" evidence="1">
    <location>
        <position position="200"/>
    </location>
</feature>
<feature type="binding site" evidence="1">
    <location>
        <begin position="12"/>
        <end position="19"/>
    </location>
    <ligand>
        <name>ATP</name>
        <dbReference type="ChEBI" id="CHEBI:30616"/>
    </ligand>
</feature>
<feature type="binding site" evidence="1">
    <location>
        <position position="38"/>
    </location>
    <ligand>
        <name>ATP</name>
        <dbReference type="ChEBI" id="CHEBI:30616"/>
    </ligand>
</feature>
<feature type="binding site" evidence="1">
    <location>
        <position position="128"/>
    </location>
    <ligand>
        <name>ATP</name>
        <dbReference type="ChEBI" id="CHEBI:30616"/>
    </ligand>
</feature>
<feature type="site" description="Interaction with tRNA" evidence="1">
    <location>
        <position position="129"/>
    </location>
</feature>
<feature type="site" description="Interaction with tRNA" evidence="1">
    <location>
        <position position="345"/>
    </location>
</feature>
<feature type="disulfide bond" description="Alternate" evidence="1">
    <location>
        <begin position="103"/>
        <end position="200"/>
    </location>
</feature>